<comment type="function">
    <text evidence="3 4">Involved in the control of reactive oxygen species levels and the regulation of mitochondrial redox homeostasis (By similarity). Maintains mitochondrial thioredoxin in a reduced state. May play a role in redox-regulated cell signaling.</text>
</comment>
<comment type="catalytic activity">
    <reaction evidence="4">
        <text>[thioredoxin]-dithiol + NADP(+) = [thioredoxin]-disulfide + NADPH + H(+)</text>
        <dbReference type="Rhea" id="RHEA:20345"/>
        <dbReference type="Rhea" id="RHEA-COMP:10698"/>
        <dbReference type="Rhea" id="RHEA-COMP:10700"/>
        <dbReference type="ChEBI" id="CHEBI:15378"/>
        <dbReference type="ChEBI" id="CHEBI:29950"/>
        <dbReference type="ChEBI" id="CHEBI:50058"/>
        <dbReference type="ChEBI" id="CHEBI:57783"/>
        <dbReference type="ChEBI" id="CHEBI:58349"/>
        <dbReference type="EC" id="1.8.1.9"/>
    </reaction>
    <physiologicalReaction direction="right-to-left" evidence="6">
        <dbReference type="Rhea" id="RHEA:20347"/>
    </physiologicalReaction>
</comment>
<comment type="cofactor">
    <cofactor evidence="4">
        <name>FAD</name>
        <dbReference type="ChEBI" id="CHEBI:57692"/>
    </cofactor>
</comment>
<comment type="subunit">
    <text evidence="4">Homodimer.</text>
</comment>
<comment type="subcellular location">
    <subcellularLocation>
        <location evidence="4">Mitochondrion</location>
    </subcellularLocation>
</comment>
<comment type="alternative products">
    <event type="alternative splicing"/>
    <isoform>
        <id>Q9Z0J5-1</id>
        <name>1</name>
        <sequence type="displayed"/>
    </isoform>
    <isoform>
        <id>Q9Z0J5-2</id>
        <name>2</name>
        <sequence type="described" ref="VSP_008307"/>
    </isoform>
</comment>
<comment type="tissue specificity">
    <text evidence="4">Expressed in liver, kidney, adrenal gland and heart.</text>
</comment>
<comment type="mass spectrometry">
    <molecule>Isoform 1</molecule>
    <text>The measured range is 37-526.</text>
</comment>
<comment type="miscellaneous">
    <text evidence="1">The active site is a redox-active disulfide bond. The selenocysteine residue is also essential for catalytic activity (By similarity).</text>
</comment>
<comment type="similarity">
    <text evidence="5">Belongs to the class-I pyridine nucleotide-disulfide oxidoreductase family.</text>
</comment>
<accession>Q9Z0J5</accession>
<feature type="transit peptide" description="Mitochondrion" evidence="4">
    <location>
        <begin position="1"/>
        <end position="36"/>
    </location>
</feature>
<feature type="chain" id="PRO_0000030290" description="Thioredoxin reductase 2, mitochondrial">
    <location>
        <begin position="37"/>
        <end position="526"/>
    </location>
</feature>
<feature type="active site" description="Proton acceptor" evidence="1">
    <location>
        <position position="499"/>
    </location>
</feature>
<feature type="binding site" evidence="1">
    <location>
        <begin position="43"/>
        <end position="72"/>
    </location>
    <ligand>
        <name>FAD</name>
        <dbReference type="ChEBI" id="CHEBI:57692"/>
    </ligand>
</feature>
<feature type="non-standard amino acid" description="Selenocysteine" evidence="4">
    <location>
        <position position="525"/>
    </location>
</feature>
<feature type="modified residue" description="N6-succinyllysine" evidence="2">
    <location>
        <position position="81"/>
    </location>
</feature>
<feature type="modified residue" description="N6-succinyllysine" evidence="2">
    <location>
        <position position="177"/>
    </location>
</feature>
<feature type="modified residue" description="N6-succinyllysine" evidence="2">
    <location>
        <position position="331"/>
    </location>
</feature>
<feature type="disulfide bond" description="Redox-active" evidence="1">
    <location>
        <begin position="88"/>
        <end position="93"/>
    </location>
</feature>
<feature type="cross-link" description="Cysteinyl-selenocysteine (Cys-Sec)" evidence="1">
    <location>
        <begin position="524"/>
        <end position="525"/>
    </location>
</feature>
<feature type="splice variant" id="VSP_008307" description="In isoform 2." evidence="5">
    <original>MAAIVAALRGSSGRFRPQTRVLTRGTRGAAGAASAAGG</original>
    <variation>MEG</variation>
    <location>
        <begin position="1"/>
        <end position="38"/>
    </location>
</feature>
<name>TRXR2_RAT</name>
<protein>
    <recommendedName>
        <fullName>Thioredoxin reductase 2, mitochondrial</fullName>
        <ecNumber>1.8.1.9</ecNumber>
    </recommendedName>
    <alternativeName>
        <fullName>Thioredoxin reductase TR3</fullName>
    </alternativeName>
</protein>
<organism evidence="7">
    <name type="scientific">Rattus norvegicus</name>
    <name type="common">Rat</name>
    <dbReference type="NCBI Taxonomy" id="10116"/>
    <lineage>
        <taxon>Eukaryota</taxon>
        <taxon>Metazoa</taxon>
        <taxon>Chordata</taxon>
        <taxon>Craniata</taxon>
        <taxon>Vertebrata</taxon>
        <taxon>Euteleostomi</taxon>
        <taxon>Mammalia</taxon>
        <taxon>Eutheria</taxon>
        <taxon>Euarchontoglires</taxon>
        <taxon>Glires</taxon>
        <taxon>Rodentia</taxon>
        <taxon>Myomorpha</taxon>
        <taxon>Muroidea</taxon>
        <taxon>Muridae</taxon>
        <taxon>Murinae</taxon>
        <taxon>Rattus</taxon>
    </lineage>
</organism>
<evidence type="ECO:0000250" key="1"/>
<evidence type="ECO:0000250" key="2">
    <source>
        <dbReference type="UniProtKB" id="Q9JLT4"/>
    </source>
</evidence>
<evidence type="ECO:0000250" key="3">
    <source>
        <dbReference type="UniProtKB" id="Q9NNW7"/>
    </source>
</evidence>
<evidence type="ECO:0000269" key="4">
    <source>
    </source>
</evidence>
<evidence type="ECO:0000305" key="5"/>
<evidence type="ECO:0000305" key="6">
    <source>
    </source>
</evidence>
<evidence type="ECO:0000312" key="7">
    <source>
        <dbReference type="EMBL" id="AAD13801.1"/>
    </source>
</evidence>
<keyword id="KW-0025">Alternative splicing</keyword>
<keyword id="KW-0903">Direct protein sequencing</keyword>
<keyword id="KW-1015">Disulfide bond</keyword>
<keyword id="KW-0274">FAD</keyword>
<keyword id="KW-0285">Flavoprotein</keyword>
<keyword id="KW-0496">Mitochondrion</keyword>
<keyword id="KW-0521">NADP</keyword>
<keyword id="KW-0560">Oxidoreductase</keyword>
<keyword id="KW-0676">Redox-active center</keyword>
<keyword id="KW-1185">Reference proteome</keyword>
<keyword id="KW-0712">Selenocysteine</keyword>
<keyword id="KW-0809">Transit peptide</keyword>
<proteinExistence type="evidence at protein level"/>
<gene>
    <name type="primary">Txnrd2</name>
    <name type="synonym">Trxr2</name>
</gene>
<sequence>MAAIVAALRGSSGRFRPQTRVLTRGTRGAAGAASAAGGQQNFDLLVIGGGSGGLACAKEAAQLGRKVAVADYVEPSPRGTKWGLGGTCVNVGCIPKKLMHQAALLGGMIRDAQHYGWEVAQPVQHNWKAMAEAVQNHVKSLNWGHRVQLQDRKVKYFNIKASFVNEHTVHGVDKAGKVTQLSAKHIVIATGGRPKYPTQVKGALEHGITSDDIFWLKESPGKTLVVGASYVALECAGFLTGIGLDTTVMMRSVPLRGFDQQMASLVTEHMESHGTRFLKGCVPSLIRKLPTNQLQVTWEDLASGKEDVGTFDTVLWAIGRVPETRNLNLEKAGVNTNPKNQKIIVDAQEATSVPHIYAIGDVAEGRPELTPTAIKAGKLLAQRLFGKSSTLMNYSNVPTTVFTPLEYGCVGLSEEEAVALHGQEHIEVYHAYYKPLEFTVADRDASQCYIKMVCMREPPQLVLGLHFLGPNAGEVTQGFALGIQCGASYAQVMQTVGIHPTCSEEVVKLHISKRSGLDPTVTGCUG</sequence>
<reference evidence="5" key="1">
    <citation type="journal article" date="1999" name="J. Biol. Chem.">
        <title>Molecular cloning and characterization of a mitochondrial selenocysteine-containing thioredoxin reductase from rat liver.</title>
        <authorList>
            <person name="Lee S.-R."/>
            <person name="Kim J.-R."/>
            <person name="Kwon K.-S."/>
            <person name="Yoon H.W."/>
            <person name="Levine R.L."/>
            <person name="Ginsburg A."/>
            <person name="Rhee S.G."/>
        </authorList>
    </citation>
    <scope>NUCLEOTIDE SEQUENCE [MRNA] (ISOFORM 1)</scope>
    <scope>PROTEIN SEQUENCE OF 37-55; 206-217; 343-362 AND 515-526</scope>
    <scope>SELENOCYSTEINE AT SEC-525</scope>
    <scope>FUNCTION</scope>
    <scope>CATALYTIC ACTIVITY</scope>
    <scope>MASS SPECTROMETRY</scope>
    <scope>COFACTOR</scope>
    <scope>SUBUNIT</scope>
    <scope>SUBCELLULAR LOCATION</scope>
    <scope>TISSUE SPECIFICITY</scope>
    <source>
        <strain>Sprague-Dawley</strain>
        <tissue>Liver</tissue>
    </source>
</reference>
<reference key="2">
    <citation type="journal article" date="2004" name="Genome Res.">
        <title>The status, quality, and expansion of the NIH full-length cDNA project: the Mammalian Gene Collection (MGC).</title>
        <authorList>
            <consortium name="The MGC Project Team"/>
        </authorList>
    </citation>
    <scope>NUCLEOTIDE SEQUENCE [LARGE SCALE MRNA] (ISOFORM 1)</scope>
    <source>
        <tissue>Heart</tissue>
    </source>
</reference>
<reference key="3">
    <citation type="journal article" date="2001" name="J. Biol. Chem.">
        <title>Heterogeneity within animal thioredoxin reductases: evidence for alternative first exon splicing.</title>
        <authorList>
            <person name="Sun Q.-A."/>
            <person name="Zappacosta F."/>
            <person name="Factor V.M."/>
            <person name="Wirth P.J."/>
            <person name="Hatfield D.L."/>
            <person name="Gladyshev V.N."/>
        </authorList>
    </citation>
    <scope>ALTERNATIVE SPLICING (ISOFORMS 1 AND 2)</scope>
</reference>
<dbReference type="EC" id="1.8.1.9"/>
<dbReference type="EMBL" id="AF072865">
    <property type="protein sequence ID" value="AAD13801.1"/>
    <property type="molecule type" value="mRNA"/>
</dbReference>
<dbReference type="EMBL" id="BC085734">
    <property type="protein sequence ID" value="AAH85734.1"/>
    <property type="molecule type" value="mRNA"/>
</dbReference>
<dbReference type="RefSeq" id="NP_072106.1">
    <molecule id="Q9Z0J5-1"/>
    <property type="nucleotide sequence ID" value="NM_022584.3"/>
</dbReference>
<dbReference type="FunCoup" id="Q9Z0J5">
    <property type="interactions" value="1001"/>
</dbReference>
<dbReference type="STRING" id="10116.ENSRNOP00000002593"/>
<dbReference type="BindingDB" id="Q9Z0J5"/>
<dbReference type="ChEMBL" id="CHEMBL5086"/>
<dbReference type="iPTMnet" id="Q9Z0J5"/>
<dbReference type="PhosphoSitePlus" id="Q9Z0J5"/>
<dbReference type="SwissPalm" id="Q9Z0J5"/>
<dbReference type="jPOST" id="Q9Z0J5"/>
<dbReference type="PaxDb" id="10116-ENSRNOP00000002593"/>
<dbReference type="Ensembl" id="ENSRNOT00000002593.8">
    <molecule id="Q9Z0J5-1"/>
    <property type="protein sequence ID" value="ENSRNOP00000002593.7"/>
    <property type="gene ID" value="ENSRNOG00000001890.8"/>
</dbReference>
<dbReference type="GeneID" id="50551"/>
<dbReference type="KEGG" id="rno:50551"/>
<dbReference type="AGR" id="RGD:61960"/>
<dbReference type="CTD" id="10587"/>
<dbReference type="RGD" id="61960">
    <property type="gene designation" value="Txnrd2"/>
</dbReference>
<dbReference type="eggNOG" id="KOG4716">
    <property type="taxonomic scope" value="Eukaryota"/>
</dbReference>
<dbReference type="GeneTree" id="ENSGT00940000158832"/>
<dbReference type="InParanoid" id="Q9Z0J5"/>
<dbReference type="OMA" id="CFDYVKP"/>
<dbReference type="OrthoDB" id="5956163at2759"/>
<dbReference type="PhylomeDB" id="Q9Z0J5"/>
<dbReference type="BRENDA" id="1.8.1.9">
    <property type="organism ID" value="5301"/>
</dbReference>
<dbReference type="Reactome" id="R-RNO-3299685">
    <property type="pathway name" value="Detoxification of Reactive Oxygen Species"/>
</dbReference>
<dbReference type="SABIO-RK" id="Q9Z0J5"/>
<dbReference type="PRO" id="PR:Q9Z0J5"/>
<dbReference type="Proteomes" id="UP000002494">
    <property type="component" value="Chromosome 11"/>
</dbReference>
<dbReference type="GO" id="GO:0030424">
    <property type="term" value="C:axon"/>
    <property type="evidence" value="ECO:0000314"/>
    <property type="project" value="RGD"/>
</dbReference>
<dbReference type="GO" id="GO:0005737">
    <property type="term" value="C:cytoplasm"/>
    <property type="evidence" value="ECO:0000318"/>
    <property type="project" value="GO_Central"/>
</dbReference>
<dbReference type="GO" id="GO:0005829">
    <property type="term" value="C:cytosol"/>
    <property type="evidence" value="ECO:0000318"/>
    <property type="project" value="GO_Central"/>
</dbReference>
<dbReference type="GO" id="GO:0030425">
    <property type="term" value="C:dendrite"/>
    <property type="evidence" value="ECO:0000314"/>
    <property type="project" value="RGD"/>
</dbReference>
<dbReference type="GO" id="GO:0005739">
    <property type="term" value="C:mitochondrion"/>
    <property type="evidence" value="ECO:0000314"/>
    <property type="project" value="UniProtKB"/>
</dbReference>
<dbReference type="GO" id="GO:0043025">
    <property type="term" value="C:neuronal cell body"/>
    <property type="evidence" value="ECO:0000314"/>
    <property type="project" value="RGD"/>
</dbReference>
<dbReference type="GO" id="GO:0050660">
    <property type="term" value="F:flavin adenine dinucleotide binding"/>
    <property type="evidence" value="ECO:0007669"/>
    <property type="project" value="InterPro"/>
</dbReference>
<dbReference type="GO" id="GO:0042803">
    <property type="term" value="F:protein homodimerization activity"/>
    <property type="evidence" value="ECO:0000314"/>
    <property type="project" value="UniProtKB"/>
</dbReference>
<dbReference type="GO" id="GO:0044877">
    <property type="term" value="F:protein-containing complex binding"/>
    <property type="evidence" value="ECO:0000314"/>
    <property type="project" value="RGD"/>
</dbReference>
<dbReference type="GO" id="GO:0004791">
    <property type="term" value="F:thioredoxin-disulfide reductase (NADPH) activity"/>
    <property type="evidence" value="ECO:0000314"/>
    <property type="project" value="UniProtKB"/>
</dbReference>
<dbReference type="GO" id="GO:0045454">
    <property type="term" value="P:cell redox homeostasis"/>
    <property type="evidence" value="ECO:0000250"/>
    <property type="project" value="UniProtKB"/>
</dbReference>
<dbReference type="GO" id="GO:0007507">
    <property type="term" value="P:heart development"/>
    <property type="evidence" value="ECO:0000266"/>
    <property type="project" value="RGD"/>
</dbReference>
<dbReference type="GO" id="GO:0030097">
    <property type="term" value="P:hemopoiesis"/>
    <property type="evidence" value="ECO:0000266"/>
    <property type="project" value="RGD"/>
</dbReference>
<dbReference type="GO" id="GO:0065003">
    <property type="term" value="P:protein-containing complex assembly"/>
    <property type="evidence" value="ECO:0000304"/>
    <property type="project" value="RGD"/>
</dbReference>
<dbReference type="GO" id="GO:0042542">
    <property type="term" value="P:response to hydrogen peroxide"/>
    <property type="evidence" value="ECO:0000304"/>
    <property type="project" value="RGD"/>
</dbReference>
<dbReference type="GO" id="GO:0055093">
    <property type="term" value="P:response to hyperoxia"/>
    <property type="evidence" value="ECO:0000270"/>
    <property type="project" value="RGD"/>
</dbReference>
<dbReference type="GO" id="GO:0000305">
    <property type="term" value="P:response to oxygen radical"/>
    <property type="evidence" value="ECO:0000304"/>
    <property type="project" value="UniProtKB"/>
</dbReference>
<dbReference type="GO" id="GO:0010269">
    <property type="term" value="P:response to selenium ion"/>
    <property type="evidence" value="ECO:0000270"/>
    <property type="project" value="RGD"/>
</dbReference>
<dbReference type="FunFam" id="3.50.50.60:FF:000190">
    <property type="entry name" value="Thioredoxin reductase"/>
    <property type="match status" value="1"/>
</dbReference>
<dbReference type="FunFam" id="3.30.390.30:FF:000004">
    <property type="entry name" value="Thioredoxin reductase 1, cytoplasmic"/>
    <property type="match status" value="1"/>
</dbReference>
<dbReference type="Gene3D" id="3.30.390.30">
    <property type="match status" value="1"/>
</dbReference>
<dbReference type="Gene3D" id="3.50.50.60">
    <property type="entry name" value="FAD/NAD(P)-binding domain"/>
    <property type="match status" value="2"/>
</dbReference>
<dbReference type="InterPro" id="IPR036188">
    <property type="entry name" value="FAD/NAD-bd_sf"/>
</dbReference>
<dbReference type="InterPro" id="IPR023753">
    <property type="entry name" value="FAD/NAD-binding_dom"/>
</dbReference>
<dbReference type="InterPro" id="IPR016156">
    <property type="entry name" value="FAD/NAD-linked_Rdtase_dimer_sf"/>
</dbReference>
<dbReference type="InterPro" id="IPR046952">
    <property type="entry name" value="GSHR/TRXR-like"/>
</dbReference>
<dbReference type="InterPro" id="IPR001100">
    <property type="entry name" value="Pyr_nuc-diS_OxRdtase"/>
</dbReference>
<dbReference type="InterPro" id="IPR004099">
    <property type="entry name" value="Pyr_nucl-diS_OxRdtase_dimer"/>
</dbReference>
<dbReference type="InterPro" id="IPR012999">
    <property type="entry name" value="Pyr_OxRdtase_I_AS"/>
</dbReference>
<dbReference type="InterPro" id="IPR006338">
    <property type="entry name" value="Thioredoxin/glutathione_Rdtase"/>
</dbReference>
<dbReference type="NCBIfam" id="TIGR01438">
    <property type="entry name" value="TGR"/>
    <property type="match status" value="1"/>
</dbReference>
<dbReference type="PANTHER" id="PTHR42737">
    <property type="entry name" value="GLUTATHIONE REDUCTASE"/>
    <property type="match status" value="1"/>
</dbReference>
<dbReference type="PANTHER" id="PTHR42737:SF7">
    <property type="entry name" value="THIOREDOXIN-DISULFIDE REDUCTASE"/>
    <property type="match status" value="1"/>
</dbReference>
<dbReference type="Pfam" id="PF07992">
    <property type="entry name" value="Pyr_redox_2"/>
    <property type="match status" value="1"/>
</dbReference>
<dbReference type="Pfam" id="PF02852">
    <property type="entry name" value="Pyr_redox_dim"/>
    <property type="match status" value="1"/>
</dbReference>
<dbReference type="PIRSF" id="PIRSF000350">
    <property type="entry name" value="Mercury_reductase_MerA"/>
    <property type="match status" value="1"/>
</dbReference>
<dbReference type="PRINTS" id="PR00368">
    <property type="entry name" value="FADPNR"/>
</dbReference>
<dbReference type="PRINTS" id="PR00411">
    <property type="entry name" value="PNDRDTASEI"/>
</dbReference>
<dbReference type="SUPFAM" id="SSF51905">
    <property type="entry name" value="FAD/NAD(P)-binding domain"/>
    <property type="match status" value="1"/>
</dbReference>
<dbReference type="SUPFAM" id="SSF55424">
    <property type="entry name" value="FAD/NAD-linked reductases, dimerisation (C-terminal) domain"/>
    <property type="match status" value="1"/>
</dbReference>
<dbReference type="PROSITE" id="PS00076">
    <property type="entry name" value="PYRIDINE_REDOX_1"/>
    <property type="match status" value="1"/>
</dbReference>